<name>DPCKG_DESA1</name>
<comment type="function">
    <text evidence="1">Catalyzes the GTP-dependent phosphorylation of the 3'-hydroxyl group of dephosphocoenzyme A to form coenzyme A (CoA).</text>
</comment>
<comment type="catalytic activity">
    <reaction evidence="1">
        <text>3'-dephospho-CoA + GTP = GDP + CoA + H(+)</text>
        <dbReference type="Rhea" id="RHEA:61156"/>
        <dbReference type="ChEBI" id="CHEBI:15378"/>
        <dbReference type="ChEBI" id="CHEBI:37565"/>
        <dbReference type="ChEBI" id="CHEBI:57287"/>
        <dbReference type="ChEBI" id="CHEBI:57328"/>
        <dbReference type="ChEBI" id="CHEBI:58189"/>
        <dbReference type="EC" id="2.7.1.237"/>
    </reaction>
</comment>
<comment type="pathway">
    <text evidence="1">Cofactor biosynthesis; coenzyme A biosynthesis.</text>
</comment>
<comment type="similarity">
    <text evidence="1">Belongs to the GTP-dependent DPCK family.</text>
</comment>
<evidence type="ECO:0000255" key="1">
    <source>
        <dbReference type="HAMAP-Rule" id="MF_00590"/>
    </source>
</evidence>
<gene>
    <name type="ordered locus">DKAM_1343</name>
</gene>
<reference key="1">
    <citation type="journal article" date="2009" name="J. Bacteriol.">
        <title>Complete genome sequence of the anaerobic, protein-degrading hyperthermophilic crenarchaeon Desulfurococcus kamchatkensis.</title>
        <authorList>
            <person name="Ravin N.V."/>
            <person name="Mardanov A.V."/>
            <person name="Beletsky A.V."/>
            <person name="Kublanov I.V."/>
            <person name="Kolganova T.V."/>
            <person name="Lebedinsky A.V."/>
            <person name="Chernyh N.A."/>
            <person name="Bonch-Osmolovskaya E.A."/>
            <person name="Skryabin K.G."/>
        </authorList>
    </citation>
    <scope>NUCLEOTIDE SEQUENCE [LARGE SCALE GENOMIC DNA]</scope>
    <source>
        <strain>DSM 18924 / JCM 16383 / VKM B-2413 / 1221n</strain>
    </source>
</reference>
<keyword id="KW-0173">Coenzyme A biosynthesis</keyword>
<keyword id="KW-0342">GTP-binding</keyword>
<keyword id="KW-0418">Kinase</keyword>
<keyword id="KW-0547">Nucleotide-binding</keyword>
<keyword id="KW-0808">Transferase</keyword>
<dbReference type="EC" id="2.7.1.237" evidence="1"/>
<dbReference type="EMBL" id="CP001140">
    <property type="protein sequence ID" value="ACL11669.1"/>
    <property type="molecule type" value="Genomic_DNA"/>
</dbReference>
<dbReference type="RefSeq" id="WP_012609010.1">
    <property type="nucleotide sequence ID" value="NC_011766.1"/>
</dbReference>
<dbReference type="SMR" id="B8D6D8"/>
<dbReference type="STRING" id="490899.DKAM_1343"/>
<dbReference type="GeneID" id="7171393"/>
<dbReference type="KEGG" id="dka:DKAM_1343"/>
<dbReference type="eggNOG" id="arCOG04076">
    <property type="taxonomic scope" value="Archaea"/>
</dbReference>
<dbReference type="HOGENOM" id="CLU_120795_1_0_2"/>
<dbReference type="UniPathway" id="UPA00241"/>
<dbReference type="Proteomes" id="UP000006903">
    <property type="component" value="Chromosome"/>
</dbReference>
<dbReference type="GO" id="GO:0005525">
    <property type="term" value="F:GTP binding"/>
    <property type="evidence" value="ECO:0007669"/>
    <property type="project" value="UniProtKB-UniRule"/>
</dbReference>
<dbReference type="GO" id="GO:0016301">
    <property type="term" value="F:kinase activity"/>
    <property type="evidence" value="ECO:0007669"/>
    <property type="project" value="UniProtKB-UniRule"/>
</dbReference>
<dbReference type="GO" id="GO:0015937">
    <property type="term" value="P:coenzyme A biosynthetic process"/>
    <property type="evidence" value="ECO:0007669"/>
    <property type="project" value="UniProtKB-UniRule"/>
</dbReference>
<dbReference type="HAMAP" id="MF_00590">
    <property type="entry name" value="Dephospho_CoA_kinase_GTP_dep"/>
    <property type="match status" value="1"/>
</dbReference>
<dbReference type="InterPro" id="IPR007164">
    <property type="entry name" value="GTP-dep_dephospho-CoA_kin"/>
</dbReference>
<dbReference type="PANTHER" id="PTHR40732:SF1">
    <property type="entry name" value="GTP-DEPENDENT DEPHOSPHO-COA KINASE"/>
    <property type="match status" value="1"/>
</dbReference>
<dbReference type="PANTHER" id="PTHR40732">
    <property type="entry name" value="UPF0218 PROTEIN TK1697"/>
    <property type="match status" value="1"/>
</dbReference>
<dbReference type="Pfam" id="PF04019">
    <property type="entry name" value="DUF359"/>
    <property type="match status" value="1"/>
</dbReference>
<proteinExistence type="inferred from homology"/>
<accession>B8D6D8</accession>
<sequence>MNKAIPVLKLPVDFRLSLSIPQGDLYVSPDRGLVYGLRADAAVGDIVSKNHMVEMRITDAKTKRHTVDVGPGECDVLVVNPQGTISINSFTSSLIGGARSICVVGEEDLLVIPFTLVRGFKIIYGQPDVGVVISSPSRERVLKILKGLKPDIVIMNL</sequence>
<organism>
    <name type="scientific">Desulfurococcus amylolyticus (strain DSM 18924 / JCM 16383 / VKM B-2413 / 1221n)</name>
    <name type="common">Desulfurococcus kamchatkensis</name>
    <dbReference type="NCBI Taxonomy" id="490899"/>
    <lineage>
        <taxon>Archaea</taxon>
        <taxon>Thermoproteota</taxon>
        <taxon>Thermoprotei</taxon>
        <taxon>Desulfurococcales</taxon>
        <taxon>Desulfurococcaceae</taxon>
        <taxon>Desulfurococcus</taxon>
    </lineage>
</organism>
<protein>
    <recommendedName>
        <fullName evidence="1">GTP-dependent dephospho-CoA kinase</fullName>
        <ecNumber evidence="1">2.7.1.237</ecNumber>
    </recommendedName>
    <alternativeName>
        <fullName evidence="1">Dephospho-coenzyme A kinase</fullName>
        <shortName evidence="1">DPCK</shortName>
    </alternativeName>
</protein>
<feature type="chain" id="PRO_0000380045" description="GTP-dependent dephospho-CoA kinase">
    <location>
        <begin position="1"/>
        <end position="157"/>
    </location>
</feature>
<feature type="binding site" evidence="1">
    <location>
        <position position="40"/>
    </location>
    <ligand>
        <name>GTP</name>
        <dbReference type="ChEBI" id="CHEBI:37565"/>
    </ligand>
</feature>
<feature type="binding site" evidence="1">
    <location>
        <position position="59"/>
    </location>
    <ligand>
        <name>GTP</name>
        <dbReference type="ChEBI" id="CHEBI:37565"/>
    </ligand>
</feature>
<feature type="binding site" evidence="1">
    <location>
        <position position="61"/>
    </location>
    <ligand>
        <name>GTP</name>
        <dbReference type="ChEBI" id="CHEBI:37565"/>
    </ligand>
</feature>
<feature type="binding site" evidence="1">
    <location>
        <position position="107"/>
    </location>
    <ligand>
        <name>GTP</name>
        <dbReference type="ChEBI" id="CHEBI:37565"/>
    </ligand>
</feature>
<feature type="binding site" evidence="1">
    <location>
        <position position="128"/>
    </location>
    <ligand>
        <name>GTP</name>
        <dbReference type="ChEBI" id="CHEBI:37565"/>
    </ligand>
</feature>